<reference key="1">
    <citation type="submission" date="2007-07" db="EMBL/GenBank/DDBJ databases">
        <title>Genome sequence of Campylobacter curvus 525.92 isolated from human feces.</title>
        <authorList>
            <person name="Fouts D.E."/>
            <person name="Mongodin E.F."/>
            <person name="Puiu D."/>
            <person name="Sebastian Y."/>
            <person name="Miller W.G."/>
            <person name="Mandrell R.E."/>
            <person name="Lastovica A.J."/>
            <person name="Nelson K.E."/>
        </authorList>
    </citation>
    <scope>NUCLEOTIDE SEQUENCE [LARGE SCALE GENOMIC DNA]</scope>
    <source>
        <strain>525.92</strain>
    </source>
</reference>
<evidence type="ECO:0000255" key="1">
    <source>
        <dbReference type="HAMAP-Rule" id="MF_00188"/>
    </source>
</evidence>
<dbReference type="EC" id="3.4.24.-" evidence="1"/>
<dbReference type="EMBL" id="CP000767">
    <property type="protein sequence ID" value="EAT99454.2"/>
    <property type="molecule type" value="Genomic_DNA"/>
</dbReference>
<dbReference type="RefSeq" id="WP_011992534.1">
    <property type="nucleotide sequence ID" value="NC_009715.2"/>
</dbReference>
<dbReference type="SMR" id="A7GZM4"/>
<dbReference type="STRING" id="360105.CCV52592_1342"/>
<dbReference type="KEGG" id="ccv:CCV52592_1342"/>
<dbReference type="HOGENOM" id="CLU_042266_3_0_7"/>
<dbReference type="OrthoDB" id="15218at2"/>
<dbReference type="Proteomes" id="UP000006380">
    <property type="component" value="Chromosome"/>
</dbReference>
<dbReference type="GO" id="GO:0005886">
    <property type="term" value="C:plasma membrane"/>
    <property type="evidence" value="ECO:0007669"/>
    <property type="project" value="UniProtKB-SubCell"/>
</dbReference>
<dbReference type="GO" id="GO:0004222">
    <property type="term" value="F:metalloendopeptidase activity"/>
    <property type="evidence" value="ECO:0007669"/>
    <property type="project" value="UniProtKB-UniRule"/>
</dbReference>
<dbReference type="GO" id="GO:0008270">
    <property type="term" value="F:zinc ion binding"/>
    <property type="evidence" value="ECO:0007669"/>
    <property type="project" value="UniProtKB-UniRule"/>
</dbReference>
<dbReference type="GO" id="GO:0006508">
    <property type="term" value="P:proteolysis"/>
    <property type="evidence" value="ECO:0007669"/>
    <property type="project" value="UniProtKB-KW"/>
</dbReference>
<dbReference type="CDD" id="cd07336">
    <property type="entry name" value="M48B_HtpX_like"/>
    <property type="match status" value="1"/>
</dbReference>
<dbReference type="Gene3D" id="3.30.2010.10">
    <property type="entry name" value="Metalloproteases ('zincins'), catalytic domain"/>
    <property type="match status" value="1"/>
</dbReference>
<dbReference type="HAMAP" id="MF_00188">
    <property type="entry name" value="Pept_M48_protease_HtpX"/>
    <property type="match status" value="1"/>
</dbReference>
<dbReference type="InterPro" id="IPR050083">
    <property type="entry name" value="HtpX_protease"/>
</dbReference>
<dbReference type="InterPro" id="IPR022919">
    <property type="entry name" value="Pept_M48_protease_HtpX"/>
</dbReference>
<dbReference type="InterPro" id="IPR001915">
    <property type="entry name" value="Peptidase_M48"/>
</dbReference>
<dbReference type="NCBIfam" id="NF002826">
    <property type="entry name" value="PRK03001.1"/>
    <property type="match status" value="1"/>
</dbReference>
<dbReference type="PANTHER" id="PTHR43221">
    <property type="entry name" value="PROTEASE HTPX"/>
    <property type="match status" value="1"/>
</dbReference>
<dbReference type="PANTHER" id="PTHR43221:SF1">
    <property type="entry name" value="PROTEASE HTPX"/>
    <property type="match status" value="1"/>
</dbReference>
<dbReference type="Pfam" id="PF01435">
    <property type="entry name" value="Peptidase_M48"/>
    <property type="match status" value="1"/>
</dbReference>
<gene>
    <name evidence="1" type="primary">htpX</name>
    <name type="ordered locus">Ccur92_13620</name>
    <name type="ORF">CCV52592_1342</name>
</gene>
<keyword id="KW-0997">Cell inner membrane</keyword>
<keyword id="KW-1003">Cell membrane</keyword>
<keyword id="KW-0378">Hydrolase</keyword>
<keyword id="KW-0472">Membrane</keyword>
<keyword id="KW-0479">Metal-binding</keyword>
<keyword id="KW-0482">Metalloprotease</keyword>
<keyword id="KW-0645">Protease</keyword>
<keyword id="KW-1185">Reference proteome</keyword>
<keyword id="KW-0812">Transmembrane</keyword>
<keyword id="KW-1133">Transmembrane helix</keyword>
<keyword id="KW-0862">Zinc</keyword>
<feature type="chain" id="PRO_1000020856" description="Protease HtpX homolog">
    <location>
        <begin position="1"/>
        <end position="286"/>
    </location>
</feature>
<feature type="transmembrane region" description="Helical" evidence="1">
    <location>
        <begin position="6"/>
        <end position="26"/>
    </location>
</feature>
<feature type="transmembrane region" description="Helical" evidence="1">
    <location>
        <begin position="28"/>
        <end position="48"/>
    </location>
</feature>
<feature type="transmembrane region" description="Helical" evidence="1">
    <location>
        <begin position="140"/>
        <end position="160"/>
    </location>
</feature>
<feature type="transmembrane region" description="Helical" evidence="1">
    <location>
        <begin position="178"/>
        <end position="198"/>
    </location>
</feature>
<feature type="active site" evidence="1">
    <location>
        <position position="131"/>
    </location>
</feature>
<feature type="binding site" evidence="1">
    <location>
        <position position="130"/>
    </location>
    <ligand>
        <name>Zn(2+)</name>
        <dbReference type="ChEBI" id="CHEBI:29105"/>
        <note>catalytic</note>
    </ligand>
</feature>
<feature type="binding site" evidence="1">
    <location>
        <position position="134"/>
    </location>
    <ligand>
        <name>Zn(2+)</name>
        <dbReference type="ChEBI" id="CHEBI:29105"/>
        <note>catalytic</note>
    </ligand>
</feature>
<feature type="binding site" evidence="1">
    <location>
        <position position="203"/>
    </location>
    <ligand>
        <name>Zn(2+)</name>
        <dbReference type="ChEBI" id="CHEBI:29105"/>
        <note>catalytic</note>
    </ligand>
</feature>
<sequence length="286" mass="31360">MEIFKTCFLMVVLMLLFVFVGGYVGGQQGMIIAFLVALGMNFFSYFFSDKLVLKRYNAVEVSKKNAKGLYAIVRRLSQNAGLPMPKVYIIPERAPNAFATGRNPSHAAVAVTEGLLNLLNENEIEGVLAHELSHVRHYDILTGSIAAVMAGAIAMLANFAKFGAASGSNRNTQKGNAAIMLIIALIMPLAATIIQMAISREREYKADKGAALLTGHPEWLESALNKLENYSNSYTMQNASPQSAHMFIINPFGDIKNTLSTLFRTHPSTSDRIAELKKIGMQLKNR</sequence>
<protein>
    <recommendedName>
        <fullName evidence="1">Protease HtpX homolog</fullName>
        <ecNumber evidence="1">3.4.24.-</ecNumber>
    </recommendedName>
</protein>
<name>HTPX_CAMC5</name>
<accession>A7GZM4</accession>
<proteinExistence type="inferred from homology"/>
<comment type="cofactor">
    <cofactor evidence="1">
        <name>Zn(2+)</name>
        <dbReference type="ChEBI" id="CHEBI:29105"/>
    </cofactor>
    <text evidence="1">Binds 1 zinc ion per subunit.</text>
</comment>
<comment type="subcellular location">
    <subcellularLocation>
        <location evidence="1">Cell inner membrane</location>
        <topology evidence="1">Multi-pass membrane protein</topology>
    </subcellularLocation>
</comment>
<comment type="similarity">
    <text evidence="1">Belongs to the peptidase M48B family.</text>
</comment>
<organism>
    <name type="scientific">Campylobacter curvus (strain 525.92)</name>
    <dbReference type="NCBI Taxonomy" id="360105"/>
    <lineage>
        <taxon>Bacteria</taxon>
        <taxon>Pseudomonadati</taxon>
        <taxon>Campylobacterota</taxon>
        <taxon>Epsilonproteobacteria</taxon>
        <taxon>Campylobacterales</taxon>
        <taxon>Campylobacteraceae</taxon>
        <taxon>Campylobacter</taxon>
    </lineage>
</organism>